<accession>O27801</accession>
<reference key="1">
    <citation type="journal article" date="1997" name="J. Bacteriol.">
        <title>Complete genome sequence of Methanobacterium thermoautotrophicum deltaH: functional analysis and comparative genomics.</title>
        <authorList>
            <person name="Smith D.R."/>
            <person name="Doucette-Stamm L.A."/>
            <person name="Deloughery C."/>
            <person name="Lee H.-M."/>
            <person name="Dubois J."/>
            <person name="Aldredge T."/>
            <person name="Bashirzadeh R."/>
            <person name="Blakely D."/>
            <person name="Cook R."/>
            <person name="Gilbert K."/>
            <person name="Harrison D."/>
            <person name="Hoang L."/>
            <person name="Keagle P."/>
            <person name="Lumm W."/>
            <person name="Pothier B."/>
            <person name="Qiu D."/>
            <person name="Spadafora R."/>
            <person name="Vicare R."/>
            <person name="Wang Y."/>
            <person name="Wierzbowski J."/>
            <person name="Gibson R."/>
            <person name="Jiwani N."/>
            <person name="Caruso A."/>
            <person name="Bush D."/>
            <person name="Safer H."/>
            <person name="Patwell D."/>
            <person name="Prabhakar S."/>
            <person name="McDougall S."/>
            <person name="Shimer G."/>
            <person name="Goyal A."/>
            <person name="Pietrovski S."/>
            <person name="Church G.M."/>
            <person name="Daniels C.J."/>
            <person name="Mao J.-I."/>
            <person name="Rice P."/>
            <person name="Noelling J."/>
            <person name="Reeve J.N."/>
        </authorList>
    </citation>
    <scope>NUCLEOTIDE SEQUENCE [LARGE SCALE GENOMIC DNA]</scope>
    <source>
        <strain>ATCC 29096 / DSM 1053 / JCM 10044 / NBRC 100330 / Delta H</strain>
    </source>
</reference>
<protein>
    <recommendedName>
        <fullName evidence="1">Ribosomal RNA large subunit methyltransferase E</fullName>
        <ecNumber evidence="1">2.1.1.166</ecNumber>
    </recommendedName>
    <alternativeName>
        <fullName evidence="1">23S rRNA Um2552 methyltransferase</fullName>
    </alternativeName>
    <alternativeName>
        <fullName evidence="1">rRNA (uridine-2'-O-)-methyltransferase</fullName>
    </alternativeName>
</protein>
<organism>
    <name type="scientific">Methanothermobacter thermautotrophicus (strain ATCC 29096 / DSM 1053 / JCM 10044 / NBRC 100330 / Delta H)</name>
    <name type="common">Methanobacterium thermoautotrophicum</name>
    <dbReference type="NCBI Taxonomy" id="187420"/>
    <lineage>
        <taxon>Archaea</taxon>
        <taxon>Methanobacteriati</taxon>
        <taxon>Methanobacteriota</taxon>
        <taxon>Methanomada group</taxon>
        <taxon>Methanobacteria</taxon>
        <taxon>Methanobacteriales</taxon>
        <taxon>Methanobacteriaceae</taxon>
        <taxon>Methanothermobacter</taxon>
    </lineage>
</organism>
<name>RLME_METTH</name>
<gene>
    <name evidence="1" type="primary">rlmE</name>
    <name evidence="1" type="synonym">rrmJ</name>
    <name type="ordered locus">MTH_1773</name>
</gene>
<keyword id="KW-0963">Cytoplasm</keyword>
<keyword id="KW-0489">Methyltransferase</keyword>
<keyword id="KW-1185">Reference proteome</keyword>
<keyword id="KW-0698">rRNA processing</keyword>
<keyword id="KW-0949">S-adenosyl-L-methionine</keyword>
<keyword id="KW-0808">Transferase</keyword>
<evidence type="ECO:0000255" key="1">
    <source>
        <dbReference type="HAMAP-Rule" id="MF_01547"/>
    </source>
</evidence>
<proteinExistence type="inferred from homology"/>
<feature type="chain" id="PRO_0000155566" description="Ribosomal RNA large subunit methyltransferase E">
    <location>
        <begin position="1"/>
        <end position="211"/>
    </location>
</feature>
<feature type="active site" description="Proton acceptor" evidence="1">
    <location>
        <position position="157"/>
    </location>
</feature>
<feature type="binding site" evidence="1">
    <location>
        <position position="55"/>
    </location>
    <ligand>
        <name>S-adenosyl-L-methionine</name>
        <dbReference type="ChEBI" id="CHEBI:59789"/>
    </ligand>
</feature>
<feature type="binding site" evidence="1">
    <location>
        <position position="57"/>
    </location>
    <ligand>
        <name>S-adenosyl-L-methionine</name>
        <dbReference type="ChEBI" id="CHEBI:59789"/>
    </ligand>
</feature>
<feature type="binding site" evidence="1">
    <location>
        <position position="75"/>
    </location>
    <ligand>
        <name>S-adenosyl-L-methionine</name>
        <dbReference type="ChEBI" id="CHEBI:59789"/>
    </ligand>
</feature>
<feature type="binding site" evidence="1">
    <location>
        <position position="93"/>
    </location>
    <ligand>
        <name>S-adenosyl-L-methionine</name>
        <dbReference type="ChEBI" id="CHEBI:59789"/>
    </ligand>
</feature>
<feature type="binding site" evidence="1">
    <location>
        <position position="117"/>
    </location>
    <ligand>
        <name>S-adenosyl-L-methionine</name>
        <dbReference type="ChEBI" id="CHEBI:59789"/>
    </ligand>
</feature>
<sequence>MGKRWQAERKRDHYYRSAKKENYRSRASYKLLQLNNKYKLIKKGDRVLDLGAAPGGWSQVALDKVGEEGLVVAVDLQRIKGFPAENFRAIRGDFTDPEVKDKIIRELGGRADVVISDAAPSLSGIRDIDHLRSVDLVENVLDIAYRVLDRKGNILIKAFQGPELDRVIKELRKDFWKLKTTKPASSRKASAEMYIVGRDFKGKEKWERIIH</sequence>
<comment type="function">
    <text evidence="1">Specifically methylates the uridine in position 2552 of 23S rRNA at the 2'-O position of the ribose in the fully assembled 50S ribosomal subunit.</text>
</comment>
<comment type="catalytic activity">
    <reaction evidence="1">
        <text>uridine(2552) in 23S rRNA + S-adenosyl-L-methionine = 2'-O-methyluridine(2552) in 23S rRNA + S-adenosyl-L-homocysteine + H(+)</text>
        <dbReference type="Rhea" id="RHEA:42720"/>
        <dbReference type="Rhea" id="RHEA-COMP:10202"/>
        <dbReference type="Rhea" id="RHEA-COMP:10203"/>
        <dbReference type="ChEBI" id="CHEBI:15378"/>
        <dbReference type="ChEBI" id="CHEBI:57856"/>
        <dbReference type="ChEBI" id="CHEBI:59789"/>
        <dbReference type="ChEBI" id="CHEBI:65315"/>
        <dbReference type="ChEBI" id="CHEBI:74478"/>
        <dbReference type="EC" id="2.1.1.166"/>
    </reaction>
</comment>
<comment type="subcellular location">
    <subcellularLocation>
        <location evidence="1">Cytoplasm</location>
    </subcellularLocation>
</comment>
<comment type="similarity">
    <text evidence="1">Belongs to the class I-like SAM-binding methyltransferase superfamily. RNA methyltransferase RlmE family.</text>
</comment>
<dbReference type="EC" id="2.1.1.166" evidence="1"/>
<dbReference type="EMBL" id="AE000666">
    <property type="protein sequence ID" value="AAB86239.1"/>
    <property type="molecule type" value="Genomic_DNA"/>
</dbReference>
<dbReference type="PIR" id="G69103">
    <property type="entry name" value="G69103"/>
</dbReference>
<dbReference type="RefSeq" id="WP_010877375.1">
    <property type="nucleotide sequence ID" value="NC_000916.1"/>
</dbReference>
<dbReference type="SMR" id="O27801"/>
<dbReference type="FunCoup" id="O27801">
    <property type="interactions" value="164"/>
</dbReference>
<dbReference type="STRING" id="187420.MTH_1773"/>
<dbReference type="PaxDb" id="187420-MTH_1773"/>
<dbReference type="EnsemblBacteria" id="AAB86239">
    <property type="protein sequence ID" value="AAB86239"/>
    <property type="gene ID" value="MTH_1773"/>
</dbReference>
<dbReference type="GeneID" id="1470858"/>
<dbReference type="GeneID" id="77402291"/>
<dbReference type="KEGG" id="mth:MTH_1773"/>
<dbReference type="PATRIC" id="fig|187420.15.peg.1728"/>
<dbReference type="HOGENOM" id="CLU_009422_4_4_2"/>
<dbReference type="InParanoid" id="O27801"/>
<dbReference type="Proteomes" id="UP000005223">
    <property type="component" value="Chromosome"/>
</dbReference>
<dbReference type="GO" id="GO:0005737">
    <property type="term" value="C:cytoplasm"/>
    <property type="evidence" value="ECO:0007669"/>
    <property type="project" value="UniProtKB-SubCell"/>
</dbReference>
<dbReference type="GO" id="GO:0008650">
    <property type="term" value="F:rRNA (uridine-2'-O-)-methyltransferase activity"/>
    <property type="evidence" value="ECO:0007669"/>
    <property type="project" value="UniProtKB-UniRule"/>
</dbReference>
<dbReference type="Gene3D" id="3.40.50.150">
    <property type="entry name" value="Vaccinia Virus protein VP39"/>
    <property type="match status" value="1"/>
</dbReference>
<dbReference type="HAMAP" id="MF_01547">
    <property type="entry name" value="RNA_methyltr_E"/>
    <property type="match status" value="1"/>
</dbReference>
<dbReference type="InterPro" id="IPR050082">
    <property type="entry name" value="RNA_methyltr_RlmE"/>
</dbReference>
<dbReference type="InterPro" id="IPR002877">
    <property type="entry name" value="RNA_MeTrfase_FtsJ_dom"/>
</dbReference>
<dbReference type="InterPro" id="IPR015507">
    <property type="entry name" value="rRNA-MeTfrase_E"/>
</dbReference>
<dbReference type="InterPro" id="IPR004512">
    <property type="entry name" value="rRNA_MeTrfase_gammaproteobac"/>
</dbReference>
<dbReference type="InterPro" id="IPR029063">
    <property type="entry name" value="SAM-dependent_MTases_sf"/>
</dbReference>
<dbReference type="NCBIfam" id="TIGR00438">
    <property type="entry name" value="rrmJ"/>
    <property type="match status" value="1"/>
</dbReference>
<dbReference type="PANTHER" id="PTHR10920:SF13">
    <property type="entry name" value="PRE-RRNA 2'-O-RIBOSE RNA METHYLTRANSFERASE FTSJ3"/>
    <property type="match status" value="1"/>
</dbReference>
<dbReference type="PANTHER" id="PTHR10920">
    <property type="entry name" value="RIBOSOMAL RNA METHYLTRANSFERASE"/>
    <property type="match status" value="1"/>
</dbReference>
<dbReference type="Pfam" id="PF01728">
    <property type="entry name" value="FtsJ"/>
    <property type="match status" value="1"/>
</dbReference>
<dbReference type="PIRSF" id="PIRSF005461">
    <property type="entry name" value="23S_rRNA_mtase"/>
    <property type="match status" value="1"/>
</dbReference>
<dbReference type="SUPFAM" id="SSF53335">
    <property type="entry name" value="S-adenosyl-L-methionine-dependent methyltransferases"/>
    <property type="match status" value="1"/>
</dbReference>